<name>DPOL_HBVH3</name>
<evidence type="ECO:0000255" key="1">
    <source>
        <dbReference type="HAMAP-Rule" id="MF_04073"/>
    </source>
</evidence>
<evidence type="ECO:0000256" key="2">
    <source>
        <dbReference type="SAM" id="MobiDB-lite"/>
    </source>
</evidence>
<protein>
    <recommendedName>
        <fullName evidence="1">Protein P</fullName>
    </recommendedName>
    <domain>
        <recommendedName>
            <fullName evidence="1">DNA-directed DNA polymerase</fullName>
            <ecNumber evidence="1">2.7.7.7</ecNumber>
        </recommendedName>
    </domain>
    <domain>
        <recommendedName>
            <fullName evidence="1">RNA-directed DNA polymerase</fullName>
            <ecNumber evidence="1">2.7.7.49</ecNumber>
        </recommendedName>
    </domain>
    <domain>
        <recommendedName>
            <fullName evidence="1">Ribonuclease H</fullName>
            <ecNumber evidence="1">3.1.26.4</ecNumber>
        </recommendedName>
    </domain>
</protein>
<proteinExistence type="inferred from homology"/>
<dbReference type="EC" id="2.7.7.7" evidence="1"/>
<dbReference type="EC" id="2.7.7.49" evidence="1"/>
<dbReference type="EC" id="3.1.26.4" evidence="1"/>
<dbReference type="EMBL" id="AY090457">
    <property type="protein sequence ID" value="AAM09053.1"/>
    <property type="molecule type" value="Genomic_DNA"/>
</dbReference>
<dbReference type="Proteomes" id="UP000007409">
    <property type="component" value="Segment"/>
</dbReference>
<dbReference type="GO" id="GO:0003677">
    <property type="term" value="F:DNA binding"/>
    <property type="evidence" value="ECO:0007669"/>
    <property type="project" value="UniProtKB-UniRule"/>
</dbReference>
<dbReference type="GO" id="GO:0003887">
    <property type="term" value="F:DNA-directed DNA polymerase activity"/>
    <property type="evidence" value="ECO:0007669"/>
    <property type="project" value="UniProtKB-UniRule"/>
</dbReference>
<dbReference type="GO" id="GO:0046872">
    <property type="term" value="F:metal ion binding"/>
    <property type="evidence" value="ECO:0007669"/>
    <property type="project" value="UniProtKB-UniRule"/>
</dbReference>
<dbReference type="GO" id="GO:0003964">
    <property type="term" value="F:RNA-directed DNA polymerase activity"/>
    <property type="evidence" value="ECO:0007669"/>
    <property type="project" value="UniProtKB-UniRule"/>
</dbReference>
<dbReference type="GO" id="GO:0004523">
    <property type="term" value="F:RNA-DNA hybrid ribonuclease activity"/>
    <property type="evidence" value="ECO:0007669"/>
    <property type="project" value="UniProtKB-UniRule"/>
</dbReference>
<dbReference type="GO" id="GO:0006260">
    <property type="term" value="P:DNA replication"/>
    <property type="evidence" value="ECO:0007669"/>
    <property type="project" value="UniProtKB-UniRule"/>
</dbReference>
<dbReference type="GO" id="GO:0052170">
    <property type="term" value="P:symbiont-mediated suppression of host innate immune response"/>
    <property type="evidence" value="ECO:0007669"/>
    <property type="project" value="UniProtKB-UniRule"/>
</dbReference>
<dbReference type="FunFam" id="3.30.70.270:FF:000009">
    <property type="entry name" value="Protein P"/>
    <property type="match status" value="1"/>
</dbReference>
<dbReference type="Gene3D" id="3.30.70.270">
    <property type="match status" value="1"/>
</dbReference>
<dbReference type="HAMAP" id="MF_04073">
    <property type="entry name" value="HBV_DPOL"/>
    <property type="match status" value="1"/>
</dbReference>
<dbReference type="InterPro" id="IPR043502">
    <property type="entry name" value="DNA/RNA_pol_sf"/>
</dbReference>
<dbReference type="InterPro" id="IPR001462">
    <property type="entry name" value="DNApol_viral_C"/>
</dbReference>
<dbReference type="InterPro" id="IPR000201">
    <property type="entry name" value="DNApol_viral_N"/>
</dbReference>
<dbReference type="InterPro" id="IPR037531">
    <property type="entry name" value="HBV_DPOL"/>
</dbReference>
<dbReference type="InterPro" id="IPR043128">
    <property type="entry name" value="Rev_trsase/Diguanyl_cyclase"/>
</dbReference>
<dbReference type="InterPro" id="IPR000477">
    <property type="entry name" value="RT_dom"/>
</dbReference>
<dbReference type="InterPro" id="IPR051320">
    <property type="entry name" value="Viral_Replic_Matur_Polypro"/>
</dbReference>
<dbReference type="PANTHER" id="PTHR33064:SF29">
    <property type="entry name" value="PEPTIDASE A2 DOMAIN-CONTAINING PROTEIN-RELATED"/>
    <property type="match status" value="1"/>
</dbReference>
<dbReference type="PANTHER" id="PTHR33064">
    <property type="entry name" value="POL PROTEIN"/>
    <property type="match status" value="1"/>
</dbReference>
<dbReference type="Pfam" id="PF00336">
    <property type="entry name" value="DNA_pol_viral_C"/>
    <property type="match status" value="1"/>
</dbReference>
<dbReference type="Pfam" id="PF00242">
    <property type="entry name" value="DNA_pol_viral_N"/>
    <property type="match status" value="1"/>
</dbReference>
<dbReference type="Pfam" id="PF00078">
    <property type="entry name" value="RVT_1"/>
    <property type="match status" value="1"/>
</dbReference>
<dbReference type="SUPFAM" id="SSF56672">
    <property type="entry name" value="DNA/RNA polymerases"/>
    <property type="match status" value="1"/>
</dbReference>
<dbReference type="PROSITE" id="PS50878">
    <property type="entry name" value="RT_POL"/>
    <property type="match status" value="1"/>
</dbReference>
<organismHost>
    <name type="scientific">Homo sapiens</name>
    <name type="common">Human</name>
    <dbReference type="NCBI Taxonomy" id="9606"/>
</organismHost>
<organismHost>
    <name type="scientific">Pan troglodytes</name>
    <name type="common">Chimpanzee</name>
    <dbReference type="NCBI Taxonomy" id="9598"/>
</organismHost>
<organism>
    <name type="scientific">Hepatitis B virus genotype H subtype adw4 (isolate Nicaragua/2928Nic/1997)</name>
    <name type="common">HBV-H</name>
    <dbReference type="NCBI Taxonomy" id="489541"/>
    <lineage>
        <taxon>Viruses</taxon>
        <taxon>Riboviria</taxon>
        <taxon>Pararnavirae</taxon>
        <taxon>Artverviricota</taxon>
        <taxon>Revtraviricetes</taxon>
        <taxon>Blubervirales</taxon>
        <taxon>Hepadnaviridae</taxon>
        <taxon>Orthohepadnavirus</taxon>
        <taxon>Hepatitis B virus</taxon>
        <taxon>hepatitis B virus genotype H</taxon>
    </lineage>
</organism>
<gene>
    <name evidence="1" type="primary">P</name>
</gene>
<reference key="1">
    <citation type="journal article" date="2002" name="J. Gen. Virol.">
        <title>Genotype H: a new Amerindian genotype of hepatitis B virus revealed in Central America.</title>
        <authorList>
            <person name="Arauz-Ruiz P."/>
            <person name="Norder H."/>
            <person name="Robertson B.H."/>
            <person name="Magnius L.O."/>
        </authorList>
    </citation>
    <scope>NUCLEOTIDE SEQUENCE [GENOMIC DNA]</scope>
</reference>
<reference key="2">
    <citation type="journal article" date="2007" name="World J. Gastroenterol.">
        <title>Hepatitis B virus replication.</title>
        <authorList>
            <person name="Beck J."/>
            <person name="Nassal M."/>
        </authorList>
    </citation>
    <scope>REVIEW</scope>
</reference>
<comment type="function">
    <text evidence="1">Multifunctional enzyme that converts the viral RNA genome into dsDNA in viral cytoplasmic capsids. This enzyme displays a DNA polymerase activity that can copy either DNA or RNA templates, and a ribonuclease H (RNase H) activity that cleaves the RNA strand of RNA-DNA heteroduplexes in a partially processive 3'- to 5'-endonucleasic mode. Neo-synthesized pregenomic RNA (pgRNA) are encapsidated together with the P protein, and reverse-transcribed inside the nucleocapsid. Initiation of reverse-transcription occurs first by binding the epsilon loop on the pgRNA genome, and is initiated by protein priming, thereby the 5'-end of (-)DNA is covalently linked to P protein. Partial (+)DNA is synthesized from the (-)DNA template and generates the relaxed circular DNA (RC-DNA) genome. After budding and infection, the RC-DNA migrates in the nucleus, and is converted into a plasmid-like covalently closed circular DNA (cccDNA). The activity of P protein does not seem to be necessary for cccDNA generation, and is presumably released from (+)DNA by host nuclear DNA repair machinery.</text>
</comment>
<comment type="catalytic activity">
    <reaction evidence="1">
        <text>DNA(n) + a 2'-deoxyribonucleoside 5'-triphosphate = DNA(n+1) + diphosphate</text>
        <dbReference type="Rhea" id="RHEA:22508"/>
        <dbReference type="Rhea" id="RHEA-COMP:17339"/>
        <dbReference type="Rhea" id="RHEA-COMP:17340"/>
        <dbReference type="ChEBI" id="CHEBI:33019"/>
        <dbReference type="ChEBI" id="CHEBI:61560"/>
        <dbReference type="ChEBI" id="CHEBI:173112"/>
        <dbReference type="EC" id="2.7.7.7"/>
    </reaction>
</comment>
<comment type="catalytic activity">
    <reaction evidence="1">
        <text>DNA(n) + a 2'-deoxyribonucleoside 5'-triphosphate = DNA(n+1) + diphosphate</text>
        <dbReference type="Rhea" id="RHEA:22508"/>
        <dbReference type="Rhea" id="RHEA-COMP:17339"/>
        <dbReference type="Rhea" id="RHEA-COMP:17340"/>
        <dbReference type="ChEBI" id="CHEBI:33019"/>
        <dbReference type="ChEBI" id="CHEBI:61560"/>
        <dbReference type="ChEBI" id="CHEBI:173112"/>
        <dbReference type="EC" id="2.7.7.49"/>
    </reaction>
</comment>
<comment type="catalytic activity">
    <reaction evidence="1">
        <text>Endonucleolytic cleavage to 5'-phosphomonoester.</text>
        <dbReference type="EC" id="3.1.26.4"/>
    </reaction>
</comment>
<comment type="activity regulation">
    <text evidence="1">Activated by host HSP70 and HSP40 in vitro to be able to bind the epsilon loop of the pgRNA. Because deletion of the RNase H region renders the protein partly chaperone-independent, the chaperones may be needed indirectly to relieve occlusion of the RNA-binding site by this domain. Inhibited by several reverse-transcriptase inhibitors: Lamivudine, Adefovir and Entecavir.</text>
</comment>
<comment type="domain">
    <text evidence="1">Terminal protein domain (TP) is hepadnavirus-specific. Spacer domain is highly variable and separates the TP and RT domains. Polymerase/reverse-transcriptase domain (RT) and ribonuclease H domain (RH) are similar to retrovirus reverse transcriptase/RNase H.</text>
</comment>
<comment type="domain">
    <text evidence="1">The polymerase/reverse transcriptase (RT) and ribonuclease H (RH) domains are structured in five subdomains: finger, palm, thumb, connection and RNase H. Within the palm subdomain, the 'primer grip' region is thought to be involved in the positioning of the primer terminus for accommodating the incoming nucleotide. The RH domain stabilizes the association of RT with primer-template.</text>
</comment>
<comment type="miscellaneous">
    <text evidence="1">Hepadnaviral virions contain probably just one P protein molecule per particle.</text>
</comment>
<comment type="similarity">
    <text evidence="1">Belongs to the hepadnaviridae P protein family.</text>
</comment>
<accession>Q8JMZ7</accession>
<sequence length="843" mass="94504">MPLSYQHFRRLLLLDNEAGPLEEELPRLADEDLNHRVAEDLNLQLPNVSIPWTHKVGNFTGLYSSTVPVFNPDWLTPSFPDIHLHQDLIQKCEQFVGPLTKNEVRRLKLIMPARFYPKVTKYFPLDKGIKPYYPEHVVNHYFKTRHYLHTLWKAGILYKRESTHSASFCGSPYSWEQELQHGSTSLNGEKGHGTESFCAQSSGILSRPPVGSTIQSKFQQSRLGLQHKQGQLANGKQGRSGRLWSRVHTPTRWPSGVEPSGTGHSDNLATRSTSRFHQSEVRKETNPSLSTSKGHTSTGHAVELNTVPPSTVGSESKGSVSSCWWLQFRNTEPCSDYCLSHIINLLEDWGPCYEHGEHHIRTPRTPSRVTGGVFLVDKNPHNTTESRLVVDFSQFSRGTTRVSWPKFAVPNLQSLTNLLSSNLSWLSLDVSAAFYHLPLHPAAMPHLLVGSSGLSRYVARVSSTSRIYNHQHGSLQNLHHSCSRNLYVSLLLLYQTFGRKLHLYSHPIILGFRKIPMGVGLSPFLLAQFTSAICSVVRRAFPHCLAFSYMDDLVLGAKSVQHLESLYTAVTNFLLSVGIHLNTAKTKWWGYSLHFMGYIIGSWGTLPQEHIVQKIKDCFRKLPVNRPIDWKVCQRIVGLLGFAAPFTQCGYPALMPLYACITAKQAFVFSPTYKAFLCKQYMNLYPVARQRPGLCQVFADATPTGWGLAIGHQRMRGTFVAPLPIHTAELLAACFARSRSGADIIGTDNSVVLSRKYTSFPWLLGCAANWILRGTSFVYVPSALNPADDPSRGRLGLCRPLLRLPFRPTTGRTSLYADSPPVPSHLPARVHFASPLHVAWRPP</sequence>
<keyword id="KW-0235">DNA replication</keyword>
<keyword id="KW-0238">DNA-binding</keyword>
<keyword id="KW-0239">DNA-directed DNA polymerase</keyword>
<keyword id="KW-0255">Endonuclease</keyword>
<keyword id="KW-0945">Host-virus interaction</keyword>
<keyword id="KW-0378">Hydrolase</keyword>
<keyword id="KW-1090">Inhibition of host innate immune response by virus</keyword>
<keyword id="KW-1113">Inhibition of host RLR pathway by virus</keyword>
<keyword id="KW-0460">Magnesium</keyword>
<keyword id="KW-0479">Metal-binding</keyword>
<keyword id="KW-0511">Multifunctional enzyme</keyword>
<keyword id="KW-0540">Nuclease</keyword>
<keyword id="KW-0548">Nucleotidyltransferase</keyword>
<keyword id="KW-0695">RNA-directed DNA polymerase</keyword>
<keyword id="KW-0808">Transferase</keyword>
<keyword id="KW-0899">Viral immunoevasion</keyword>
<feature type="chain" id="PRO_0000323282" description="Protein P">
    <location>
        <begin position="1"/>
        <end position="843"/>
    </location>
</feature>
<feature type="domain" description="Reverse transcriptase" evidence="1">
    <location>
        <begin position="357"/>
        <end position="600"/>
    </location>
</feature>
<feature type="region of interest" description="Terminal protein domain (TP)" evidence="1">
    <location>
        <begin position="1"/>
        <end position="177"/>
    </location>
</feature>
<feature type="region of interest" description="Spacer" evidence="1">
    <location>
        <begin position="178"/>
        <end position="346"/>
    </location>
</feature>
<feature type="region of interest" description="Disordered" evidence="2">
    <location>
        <begin position="228"/>
        <end position="316"/>
    </location>
</feature>
<feature type="region of interest" description="Polymerase/reverse transcriptase domain (RT)" evidence="1">
    <location>
        <begin position="347"/>
        <end position="690"/>
    </location>
</feature>
<feature type="compositionally biased region" description="Polar residues" evidence="2">
    <location>
        <begin position="262"/>
        <end position="276"/>
    </location>
</feature>
<feature type="compositionally biased region" description="Polar residues" evidence="2">
    <location>
        <begin position="286"/>
        <end position="299"/>
    </location>
</feature>
<feature type="compositionally biased region" description="Polar residues" evidence="2">
    <location>
        <begin position="307"/>
        <end position="316"/>
    </location>
</feature>
<feature type="binding site" evidence="1">
    <location>
        <position position="429"/>
    </location>
    <ligand>
        <name>Mg(2+)</name>
        <dbReference type="ChEBI" id="CHEBI:18420"/>
        <note>catalytic</note>
    </ligand>
</feature>
<feature type="binding site" evidence="1">
    <location>
        <position position="551"/>
    </location>
    <ligand>
        <name>Mg(2+)</name>
        <dbReference type="ChEBI" id="CHEBI:18420"/>
        <note>catalytic</note>
    </ligand>
</feature>
<feature type="binding site" evidence="1">
    <location>
        <position position="552"/>
    </location>
    <ligand>
        <name>Mg(2+)</name>
        <dbReference type="ChEBI" id="CHEBI:18420"/>
        <note>catalytic</note>
    </ligand>
</feature>
<feature type="site" description="Priming of reverse-transcription by covalently linking the first nucleotide of the (-)DNA" evidence="1">
    <location>
        <position position="63"/>
    </location>
</feature>